<evidence type="ECO:0000250" key="1"/>
<evidence type="ECO:0000255" key="2">
    <source>
        <dbReference type="PROSITE-ProRule" id="PRU00681"/>
    </source>
</evidence>
<evidence type="ECO:0000305" key="3"/>
<keyword id="KW-0963">Cytoplasm</keyword>
<keyword id="KW-0598">Phosphotransferase system</keyword>
<keyword id="KW-1185">Reference proteome</keyword>
<feature type="chain" id="PRO_0000107894" description="Phosphocarrier protein NPr">
    <location>
        <begin position="1"/>
        <end position="90"/>
    </location>
</feature>
<feature type="domain" description="HPr" evidence="2">
    <location>
        <begin position="2"/>
        <end position="90"/>
    </location>
</feature>
<feature type="active site" description="Pros-phosphohistidine intermediate" evidence="2">
    <location>
        <position position="16"/>
    </location>
</feature>
<feature type="sequence conflict" description="In Ref. 1; AAC64576." evidence="3" ref="1">
    <original>N</original>
    <variation>H</variation>
    <location>
        <position position="28"/>
    </location>
</feature>
<feature type="sequence conflict" description="In Ref. 1; AAC64576." evidence="3" ref="1">
    <original>IE</original>
    <variation>MK</variation>
    <location>
        <begin position="65"/>
        <end position="66"/>
    </location>
</feature>
<feature type="sequence conflict" description="In Ref. 1; AAC64576." evidence="3" ref="1">
    <original>A</original>
    <variation>T</variation>
    <location>
        <position position="75"/>
    </location>
</feature>
<dbReference type="EMBL" id="AF088980">
    <property type="protein sequence ID" value="AAC64576.1"/>
    <property type="molecule type" value="Genomic_DNA"/>
</dbReference>
<dbReference type="EMBL" id="AM942759">
    <property type="protein sequence ID" value="CAR47115.1"/>
    <property type="molecule type" value="Genomic_DNA"/>
</dbReference>
<dbReference type="SMR" id="Q9ZA86"/>
<dbReference type="EnsemblBacteria" id="CAR47115">
    <property type="protein sequence ID" value="CAR47115"/>
    <property type="gene ID" value="PMI3644"/>
</dbReference>
<dbReference type="GeneID" id="6800963"/>
<dbReference type="KEGG" id="pmr:PMI3644"/>
<dbReference type="eggNOG" id="COG1925">
    <property type="taxonomic scope" value="Bacteria"/>
</dbReference>
<dbReference type="HOGENOM" id="CLU_136230_1_3_6"/>
<dbReference type="Proteomes" id="UP000008319">
    <property type="component" value="Chromosome"/>
</dbReference>
<dbReference type="GO" id="GO:0005737">
    <property type="term" value="C:cytoplasm"/>
    <property type="evidence" value="ECO:0007669"/>
    <property type="project" value="UniProtKB-SubCell"/>
</dbReference>
<dbReference type="GO" id="GO:0009401">
    <property type="term" value="P:phosphoenolpyruvate-dependent sugar phosphotransferase system"/>
    <property type="evidence" value="ECO:0007669"/>
    <property type="project" value="UniProtKB-KW"/>
</dbReference>
<dbReference type="CDD" id="cd00367">
    <property type="entry name" value="PTS-HPr_like"/>
    <property type="match status" value="1"/>
</dbReference>
<dbReference type="Gene3D" id="3.30.1340.10">
    <property type="entry name" value="HPr-like"/>
    <property type="match status" value="1"/>
</dbReference>
<dbReference type="InterPro" id="IPR050399">
    <property type="entry name" value="HPr"/>
</dbReference>
<dbReference type="InterPro" id="IPR000032">
    <property type="entry name" value="HPr-like"/>
</dbReference>
<dbReference type="InterPro" id="IPR035895">
    <property type="entry name" value="HPr-like_sf"/>
</dbReference>
<dbReference type="InterPro" id="IPR001020">
    <property type="entry name" value="PTS_HPr_His_P_site"/>
</dbReference>
<dbReference type="InterPro" id="IPR002114">
    <property type="entry name" value="PTS_HPr_Ser_P_site"/>
</dbReference>
<dbReference type="NCBIfam" id="NF008146">
    <property type="entry name" value="PRK10897.1"/>
    <property type="match status" value="1"/>
</dbReference>
<dbReference type="NCBIfam" id="TIGR01003">
    <property type="entry name" value="PTS_HPr_family"/>
    <property type="match status" value="1"/>
</dbReference>
<dbReference type="PANTHER" id="PTHR33705">
    <property type="entry name" value="PHOSPHOCARRIER PROTEIN HPR"/>
    <property type="match status" value="1"/>
</dbReference>
<dbReference type="PANTHER" id="PTHR33705:SF2">
    <property type="entry name" value="PHOSPHOCARRIER PROTEIN NPR"/>
    <property type="match status" value="1"/>
</dbReference>
<dbReference type="Pfam" id="PF00381">
    <property type="entry name" value="PTS-HPr"/>
    <property type="match status" value="1"/>
</dbReference>
<dbReference type="PRINTS" id="PR00107">
    <property type="entry name" value="PHOSPHOCPHPR"/>
</dbReference>
<dbReference type="SUPFAM" id="SSF55594">
    <property type="entry name" value="HPr-like"/>
    <property type="match status" value="1"/>
</dbReference>
<dbReference type="PROSITE" id="PS51350">
    <property type="entry name" value="PTS_HPR_DOM"/>
    <property type="match status" value="1"/>
</dbReference>
<dbReference type="PROSITE" id="PS00369">
    <property type="entry name" value="PTS_HPR_HIS"/>
    <property type="match status" value="1"/>
</dbReference>
<dbReference type="PROSITE" id="PS00589">
    <property type="entry name" value="PTS_HPR_SER"/>
    <property type="match status" value="1"/>
</dbReference>
<gene>
    <name type="primary">ptsO</name>
    <name type="ordered locus">PMI3644</name>
</gene>
<organism>
    <name type="scientific">Proteus mirabilis (strain HI4320)</name>
    <dbReference type="NCBI Taxonomy" id="529507"/>
    <lineage>
        <taxon>Bacteria</taxon>
        <taxon>Pseudomonadati</taxon>
        <taxon>Pseudomonadota</taxon>
        <taxon>Gammaproteobacteria</taxon>
        <taxon>Enterobacterales</taxon>
        <taxon>Morganellaceae</taxon>
        <taxon>Proteus</taxon>
    </lineage>
</organism>
<proteinExistence type="inferred from homology"/>
<name>PTSO_PROMH</name>
<accession>Q9ZA86</accession>
<accession>B4EX43</accession>
<reference key="1">
    <citation type="journal article" date="1999" name="Microbiology">
        <title>Identification of protease and rpoN-associated genes of uropathogenic Proteus mirabilis by negative selection in a mouse model of ascending urinary tract infection.</title>
        <authorList>
            <person name="Zhao H."/>
            <person name="Li X."/>
            <person name="Johnson D.E."/>
            <person name="Mobley H.L.T."/>
        </authorList>
    </citation>
    <scope>NUCLEOTIDE SEQUENCE [GENOMIC DNA]</scope>
</reference>
<reference key="2">
    <citation type="journal article" date="2008" name="J. Bacteriol.">
        <title>Complete genome sequence of uropathogenic Proteus mirabilis, a master of both adherence and motility.</title>
        <authorList>
            <person name="Pearson M.M."/>
            <person name="Sebaihia M."/>
            <person name="Churcher C."/>
            <person name="Quail M.A."/>
            <person name="Seshasayee A.S."/>
            <person name="Luscombe N.M."/>
            <person name="Abdellah Z."/>
            <person name="Arrosmith C."/>
            <person name="Atkin B."/>
            <person name="Chillingworth T."/>
            <person name="Hauser H."/>
            <person name="Jagels K."/>
            <person name="Moule S."/>
            <person name="Mungall K."/>
            <person name="Norbertczak H."/>
            <person name="Rabbinowitsch E."/>
            <person name="Walker D."/>
            <person name="Whithead S."/>
            <person name="Thomson N.R."/>
            <person name="Rather P.N."/>
            <person name="Parkhill J."/>
            <person name="Mobley H.L.T."/>
        </authorList>
    </citation>
    <scope>NUCLEOTIDE SEQUENCE [LARGE SCALE GENOMIC DNA]</scope>
    <source>
        <strain>HI4320</strain>
    </source>
</reference>
<protein>
    <recommendedName>
        <fullName>Phosphocarrier protein NPr</fullName>
    </recommendedName>
    <alternativeName>
        <fullName>Nitrogen-related HPr</fullName>
    </alternativeName>
</protein>
<sequence length="90" mass="10014">MTQYRRVAIKNRLGMHARPAMKLFDLVNTFQSTVTLRNHEGVEAQADSVIAMLMLDSEQGSHIDIEASGCDEKEAIDAIIALFESGFDED</sequence>
<comment type="function">
    <text evidence="1">Component of the phosphoenolpyruvate-dependent nitrogen-metabolic phosphotransferase system (nitrogen-metabolic PTS), that seems to be involved in regulating nitrogen metabolism. The phosphoryl group from phosphoenolpyruvate (PEP) is transferred to the phosphoryl carrier protein NPr by enzyme I-Ntr. Phospho-NPr then transfers it to EIIA-Ntr. Could function in the transcriptional regulation of sigma-54 dependent operons in conjunction with the NPr (PtsO) and EIIA-Ntr (PtsN) proteins.</text>
</comment>
<comment type="subcellular location">
    <subcellularLocation>
        <location evidence="3">Cytoplasm</location>
    </subcellularLocation>
</comment>
<comment type="similarity">
    <text evidence="3">Belongs to the HPr family.</text>
</comment>